<accession>Q5JMM1</accession>
<accession>A0A0P0V894</accession>
<accession>B7EKN0</accession>
<protein>
    <recommendedName>
        <fullName>Auxin response factor 3</fullName>
    </recommendedName>
</protein>
<reference key="1">
    <citation type="journal article" date="2002" name="Nature">
        <title>The genome sequence and structure of rice chromosome 1.</title>
        <authorList>
            <person name="Sasaki T."/>
            <person name="Matsumoto T."/>
            <person name="Yamamoto K."/>
            <person name="Sakata K."/>
            <person name="Baba T."/>
            <person name="Katayose Y."/>
            <person name="Wu J."/>
            <person name="Niimura Y."/>
            <person name="Cheng Z."/>
            <person name="Nagamura Y."/>
            <person name="Antonio B.A."/>
            <person name="Kanamori H."/>
            <person name="Hosokawa S."/>
            <person name="Masukawa M."/>
            <person name="Arikawa K."/>
            <person name="Chiden Y."/>
            <person name="Hayashi M."/>
            <person name="Okamoto M."/>
            <person name="Ando T."/>
            <person name="Aoki H."/>
            <person name="Arita K."/>
            <person name="Hamada M."/>
            <person name="Harada C."/>
            <person name="Hijishita S."/>
            <person name="Honda M."/>
            <person name="Ichikawa Y."/>
            <person name="Idonuma A."/>
            <person name="Iijima M."/>
            <person name="Ikeda M."/>
            <person name="Ikeno M."/>
            <person name="Ito S."/>
            <person name="Ito T."/>
            <person name="Ito Y."/>
            <person name="Ito Y."/>
            <person name="Iwabuchi A."/>
            <person name="Kamiya K."/>
            <person name="Karasawa W."/>
            <person name="Katagiri S."/>
            <person name="Kikuta A."/>
            <person name="Kobayashi N."/>
            <person name="Kono I."/>
            <person name="Machita K."/>
            <person name="Maehara T."/>
            <person name="Mizuno H."/>
            <person name="Mizubayashi T."/>
            <person name="Mukai Y."/>
            <person name="Nagasaki H."/>
            <person name="Nakashima M."/>
            <person name="Nakama Y."/>
            <person name="Nakamichi Y."/>
            <person name="Nakamura M."/>
            <person name="Namiki N."/>
            <person name="Negishi M."/>
            <person name="Ohta I."/>
            <person name="Ono N."/>
            <person name="Saji S."/>
            <person name="Sakai K."/>
            <person name="Shibata M."/>
            <person name="Shimokawa T."/>
            <person name="Shomura A."/>
            <person name="Song J."/>
            <person name="Takazaki Y."/>
            <person name="Terasawa K."/>
            <person name="Tsuji K."/>
            <person name="Waki K."/>
            <person name="Yamagata H."/>
            <person name="Yamane H."/>
            <person name="Yoshiki S."/>
            <person name="Yoshihara R."/>
            <person name="Yukawa K."/>
            <person name="Zhong H."/>
            <person name="Iwama H."/>
            <person name="Endo T."/>
            <person name="Ito H."/>
            <person name="Hahn J.H."/>
            <person name="Kim H.-I."/>
            <person name="Eun M.-Y."/>
            <person name="Yano M."/>
            <person name="Jiang J."/>
            <person name="Gojobori T."/>
        </authorList>
    </citation>
    <scope>NUCLEOTIDE SEQUENCE [LARGE SCALE GENOMIC DNA]</scope>
    <source>
        <strain>cv. Nipponbare</strain>
    </source>
</reference>
<reference key="2">
    <citation type="journal article" date="2005" name="Nature">
        <title>The map-based sequence of the rice genome.</title>
        <authorList>
            <consortium name="International rice genome sequencing project (IRGSP)"/>
        </authorList>
    </citation>
    <scope>NUCLEOTIDE SEQUENCE [LARGE SCALE GENOMIC DNA]</scope>
    <source>
        <strain>cv. Nipponbare</strain>
    </source>
</reference>
<reference key="3">
    <citation type="journal article" date="2008" name="Nucleic Acids Res.">
        <title>The rice annotation project database (RAP-DB): 2008 update.</title>
        <authorList>
            <consortium name="The rice annotation project (RAP)"/>
        </authorList>
    </citation>
    <scope>GENOME REANNOTATION</scope>
    <source>
        <strain>cv. Nipponbare</strain>
    </source>
</reference>
<reference key="4">
    <citation type="journal article" date="2013" name="Rice">
        <title>Improvement of the Oryza sativa Nipponbare reference genome using next generation sequence and optical map data.</title>
        <authorList>
            <person name="Kawahara Y."/>
            <person name="de la Bastide M."/>
            <person name="Hamilton J.P."/>
            <person name="Kanamori H."/>
            <person name="McCombie W.R."/>
            <person name="Ouyang S."/>
            <person name="Schwartz D.C."/>
            <person name="Tanaka T."/>
            <person name="Wu J."/>
            <person name="Zhou S."/>
            <person name="Childs K.L."/>
            <person name="Davidson R.M."/>
            <person name="Lin H."/>
            <person name="Quesada-Ocampo L."/>
            <person name="Vaillancourt B."/>
            <person name="Sakai H."/>
            <person name="Lee S.S."/>
            <person name="Kim J."/>
            <person name="Numa H."/>
            <person name="Itoh T."/>
            <person name="Buell C.R."/>
            <person name="Matsumoto T."/>
        </authorList>
    </citation>
    <scope>GENOME REANNOTATION</scope>
    <source>
        <strain>cv. Nipponbare</strain>
    </source>
</reference>
<reference key="5">
    <citation type="journal article" date="2003" name="Science">
        <title>Collection, mapping, and annotation of over 28,000 cDNA clones from japonica rice.</title>
        <authorList>
            <consortium name="The rice full-length cDNA consortium"/>
        </authorList>
    </citation>
    <scope>NUCLEOTIDE SEQUENCE [LARGE SCALE MRNA]</scope>
    <source>
        <strain>cv. Nipponbare</strain>
    </source>
</reference>
<reference key="6">
    <citation type="journal article" date="2007" name="Gene">
        <title>Genome-wide analysis of the auxin response factors (ARF) gene family in rice (Oryza sativa).</title>
        <authorList>
            <person name="Wang D."/>
            <person name="Pei K."/>
            <person name="Fu Y."/>
            <person name="Sun Z."/>
            <person name="Li S."/>
            <person name="Liu H."/>
            <person name="Tang K."/>
            <person name="Han B."/>
            <person name="Tao Y."/>
        </authorList>
    </citation>
    <scope>GENE FAMILY</scope>
    <scope>TISSUE SPECIFICITY</scope>
    <scope>NOMENCLATURE</scope>
</reference>
<name>ARFC_ORYSJ</name>
<dbReference type="EMBL" id="AP003249">
    <property type="protein sequence ID" value="BAD87193.1"/>
    <property type="molecule type" value="Genomic_DNA"/>
</dbReference>
<dbReference type="EMBL" id="AP003268">
    <property type="protein sequence ID" value="BAD87282.1"/>
    <property type="molecule type" value="Genomic_DNA"/>
</dbReference>
<dbReference type="EMBL" id="AP008207">
    <property type="protein sequence ID" value="BAF06188.1"/>
    <property type="molecule type" value="Genomic_DNA"/>
</dbReference>
<dbReference type="EMBL" id="AP014957">
    <property type="protein sequence ID" value="BAS74386.1"/>
    <property type="molecule type" value="Genomic_DNA"/>
</dbReference>
<dbReference type="EMBL" id="AK072330">
    <property type="protein sequence ID" value="BAG92927.1"/>
    <property type="molecule type" value="mRNA"/>
</dbReference>
<dbReference type="RefSeq" id="XP_015634503.1">
    <property type="nucleotide sequence ID" value="XM_015779017.1"/>
</dbReference>
<dbReference type="SMR" id="Q5JMM1"/>
<dbReference type="FunCoup" id="Q5JMM1">
    <property type="interactions" value="56"/>
</dbReference>
<dbReference type="STRING" id="39947.Q5JMM1"/>
<dbReference type="PaxDb" id="39947-Q5JMM1"/>
<dbReference type="EnsemblPlants" id="Os01t0753500-01">
    <property type="protein sequence ID" value="Os01t0753500-01"/>
    <property type="gene ID" value="Os01g0753500"/>
</dbReference>
<dbReference type="Gramene" id="Os01t0753500-01">
    <property type="protein sequence ID" value="Os01t0753500-01"/>
    <property type="gene ID" value="Os01g0753500"/>
</dbReference>
<dbReference type="KEGG" id="dosa:Os01g0753500"/>
<dbReference type="eggNOG" id="ENOG502QQSY">
    <property type="taxonomic scope" value="Eukaryota"/>
</dbReference>
<dbReference type="HOGENOM" id="CLU_002626_2_2_1"/>
<dbReference type="InParanoid" id="Q5JMM1"/>
<dbReference type="OMA" id="FDAWRFL"/>
<dbReference type="OrthoDB" id="624437at2759"/>
<dbReference type="PlantReactome" id="R-OSA-5608118">
    <property type="pathway name" value="Auxin signalling"/>
</dbReference>
<dbReference type="PlantReactome" id="R-OSA-9675304">
    <property type="pathway name" value="Lateral root emergence"/>
</dbReference>
<dbReference type="Proteomes" id="UP000000763">
    <property type="component" value="Chromosome 1"/>
</dbReference>
<dbReference type="Proteomes" id="UP000059680">
    <property type="component" value="Chromosome 1"/>
</dbReference>
<dbReference type="GO" id="GO:0005634">
    <property type="term" value="C:nucleus"/>
    <property type="evidence" value="ECO:0007669"/>
    <property type="project" value="UniProtKB-SubCell"/>
</dbReference>
<dbReference type="GO" id="GO:0003677">
    <property type="term" value="F:DNA binding"/>
    <property type="evidence" value="ECO:0007669"/>
    <property type="project" value="UniProtKB-KW"/>
</dbReference>
<dbReference type="GO" id="GO:0009734">
    <property type="term" value="P:auxin-activated signaling pathway"/>
    <property type="evidence" value="ECO:0007669"/>
    <property type="project" value="UniProtKB-KW"/>
</dbReference>
<dbReference type="GO" id="GO:0006355">
    <property type="term" value="P:regulation of DNA-templated transcription"/>
    <property type="evidence" value="ECO:0007669"/>
    <property type="project" value="InterPro"/>
</dbReference>
<dbReference type="CDD" id="cd10017">
    <property type="entry name" value="B3_DNA"/>
    <property type="match status" value="1"/>
</dbReference>
<dbReference type="FunFam" id="2.30.30.1040:FF:000001">
    <property type="entry name" value="Auxin response factor"/>
    <property type="match status" value="1"/>
</dbReference>
<dbReference type="FunFam" id="2.40.330.10:FF:000001">
    <property type="entry name" value="Auxin response factor"/>
    <property type="match status" value="1"/>
</dbReference>
<dbReference type="Gene3D" id="2.30.30.1040">
    <property type="match status" value="1"/>
</dbReference>
<dbReference type="Gene3D" id="2.40.330.10">
    <property type="entry name" value="DNA-binding pseudobarrel domain"/>
    <property type="match status" value="1"/>
</dbReference>
<dbReference type="InterPro" id="IPR010525">
    <property type="entry name" value="ARF_dom"/>
</dbReference>
<dbReference type="InterPro" id="IPR044835">
    <property type="entry name" value="ARF_plant"/>
</dbReference>
<dbReference type="InterPro" id="IPR003340">
    <property type="entry name" value="B3_DNA-bd"/>
</dbReference>
<dbReference type="InterPro" id="IPR015300">
    <property type="entry name" value="DNA-bd_pseudobarrel_sf"/>
</dbReference>
<dbReference type="PANTHER" id="PTHR31384:SF13">
    <property type="entry name" value="AUXIN RESPONSE FACTOR 3"/>
    <property type="match status" value="1"/>
</dbReference>
<dbReference type="PANTHER" id="PTHR31384">
    <property type="entry name" value="AUXIN RESPONSE FACTOR 4-RELATED"/>
    <property type="match status" value="1"/>
</dbReference>
<dbReference type="Pfam" id="PF06507">
    <property type="entry name" value="ARF_AD"/>
    <property type="match status" value="1"/>
</dbReference>
<dbReference type="Pfam" id="PF02362">
    <property type="entry name" value="B3"/>
    <property type="match status" value="1"/>
</dbReference>
<dbReference type="SMART" id="SM01019">
    <property type="entry name" value="B3"/>
    <property type="match status" value="1"/>
</dbReference>
<dbReference type="SUPFAM" id="SSF101936">
    <property type="entry name" value="DNA-binding pseudobarrel domain"/>
    <property type="match status" value="1"/>
</dbReference>
<dbReference type="PROSITE" id="PS50863">
    <property type="entry name" value="B3"/>
    <property type="match status" value="1"/>
</dbReference>
<proteinExistence type="evidence at transcript level"/>
<keyword id="KW-0927">Auxin signaling pathway</keyword>
<keyword id="KW-0238">DNA-binding</keyword>
<keyword id="KW-0539">Nucleus</keyword>
<keyword id="KW-1185">Reference proteome</keyword>
<keyword id="KW-0804">Transcription</keyword>
<keyword id="KW-0805">Transcription regulation</keyword>
<gene>
    <name type="primary">ARF3</name>
    <name type="ordered locus">Os01g0753500</name>
    <name type="ordered locus">LOC_Os01g54990</name>
    <name type="ORF">P0435B05.36</name>
    <name type="ORF">P0503C12.8</name>
</gene>
<feature type="chain" id="PRO_0000299256" description="Auxin response factor 3">
    <location>
        <begin position="1"/>
        <end position="731"/>
    </location>
</feature>
<feature type="DNA-binding region" description="TF-B3" evidence="2">
    <location>
        <begin position="191"/>
        <end position="293"/>
    </location>
</feature>
<feature type="region of interest" description="Disordered" evidence="3">
    <location>
        <begin position="1"/>
        <end position="41"/>
    </location>
</feature>
<feature type="compositionally biased region" description="Low complexity" evidence="3">
    <location>
        <begin position="1"/>
        <end position="22"/>
    </location>
</feature>
<sequence>MASSASSSSSPSSRPPLMALPSFYRPPWPSERGGEQRATDCWAGSPAAGGGRARATAMGIDLNNTASGGEEDAPAPGPVCRDLWHACAGPVVSLPRRGSAVVYLPQGHLSAAGAGGGIRGEVAVALPPHVACRVVDVELCADAATDEVYARLALRAEGEVFERNLHGGGIEREDDMEDGDEERKSRMLHMFCKTLTASDTSTHGGFSVPRRAAEDCFPPLDHKQLRPSQELVAKDLHGAKWRFRHIYRGQPRRHLLTTGWSSFVNKKKLVSGDAVLFLRGDDGELRLGVRRATQLKNEAIFKAFSSESSKMRTLSAVADSLKHGSVFHICYNPRATASEYVVPYWKFVKSFNHPVCIGMRFKFHFESEDVNERRSGMIAGVSEVDPIRWPGSKWRSLLVRWEDATDCNSQNRVSPWEIEIVGGSISVAHSLSASSSKRTKLCPQGNLDVPALYGNGRPDSVETEKFPRVLQGQELMGSRTHRATCSPQSIDITKSKSFDAWRFLTDTRSCMLGSSTSRLPVQYSGYTHQSVSFGESIGFPEVLQGQEISQTVPPFQGMLPDACSAKSRYELKNYVCTPATMNGLSSANEGYCLSLSTVPPSPPSSLMLYQTGVPQLELASKNNDKSGNDSQPALRQHKLLSETSWDQFKIGKASTPGNATKPGNGGREVDRTSCRLFGFSLTEKIIPTDKDGEKEVSYETDCQNPRMLDLFGYNCSTPGALHALCAAPLGI</sequence>
<organism>
    <name type="scientific">Oryza sativa subsp. japonica</name>
    <name type="common">Rice</name>
    <dbReference type="NCBI Taxonomy" id="39947"/>
    <lineage>
        <taxon>Eukaryota</taxon>
        <taxon>Viridiplantae</taxon>
        <taxon>Streptophyta</taxon>
        <taxon>Embryophyta</taxon>
        <taxon>Tracheophyta</taxon>
        <taxon>Spermatophyta</taxon>
        <taxon>Magnoliopsida</taxon>
        <taxon>Liliopsida</taxon>
        <taxon>Poales</taxon>
        <taxon>Poaceae</taxon>
        <taxon>BOP clade</taxon>
        <taxon>Oryzoideae</taxon>
        <taxon>Oryzeae</taxon>
        <taxon>Oryzinae</taxon>
        <taxon>Oryza</taxon>
        <taxon>Oryza sativa</taxon>
    </lineage>
</organism>
<comment type="function">
    <text>Auxin response factors (ARFs) are transcriptional factors that bind specifically to the DNA sequence 5'-TGTCTC-3' found in the auxin-responsive promoter elements (AuxREs).</text>
</comment>
<comment type="subunit">
    <text evidence="1">Homo and heterodimers.</text>
</comment>
<comment type="subcellular location">
    <subcellularLocation>
        <location evidence="2">Nucleus</location>
    </subcellularLocation>
</comment>
<comment type="tissue specificity">
    <text evidence="4">Expressed in roots, culms, leaves and young panicles.</text>
</comment>
<comment type="similarity">
    <text evidence="5">Belongs to the ARF family.</text>
</comment>
<evidence type="ECO:0000250" key="1"/>
<evidence type="ECO:0000255" key="2">
    <source>
        <dbReference type="PROSITE-ProRule" id="PRU00326"/>
    </source>
</evidence>
<evidence type="ECO:0000256" key="3">
    <source>
        <dbReference type="SAM" id="MobiDB-lite"/>
    </source>
</evidence>
<evidence type="ECO:0000269" key="4">
    <source>
    </source>
</evidence>
<evidence type="ECO:0000305" key="5"/>